<gene>
    <name evidence="11" type="primary">DNPH1</name>
    <name evidence="11" type="synonym">C6orf108</name>
    <name evidence="9" type="synonym">RCL</name>
</gene>
<dbReference type="EC" id="3.2.2.-" evidence="3 4 5 6"/>
<dbReference type="EMBL" id="AF040105">
    <property type="protein sequence ID" value="AAB96766.1"/>
    <property type="molecule type" value="mRNA"/>
</dbReference>
<dbReference type="EMBL" id="EU585603">
    <property type="protein sequence ID" value="ACB87500.1"/>
    <property type="molecule type" value="mRNA"/>
</dbReference>
<dbReference type="EMBL" id="AL133375">
    <property type="status" value="NOT_ANNOTATED_CDS"/>
    <property type="molecule type" value="Genomic_DNA"/>
</dbReference>
<dbReference type="EMBL" id="CH471081">
    <property type="protein sequence ID" value="EAX04166.1"/>
    <property type="molecule type" value="Genomic_DNA"/>
</dbReference>
<dbReference type="EMBL" id="BC011683">
    <property type="protein sequence ID" value="AAH11683.1"/>
    <property type="molecule type" value="mRNA"/>
</dbReference>
<dbReference type="EMBL" id="BQ052226">
    <property type="status" value="NOT_ANNOTATED_CDS"/>
    <property type="molecule type" value="mRNA"/>
</dbReference>
<dbReference type="CCDS" id="CCDS43465.1">
    <molecule id="O43598-2"/>
</dbReference>
<dbReference type="CCDS" id="CCDS4891.1">
    <molecule id="O43598-1"/>
</dbReference>
<dbReference type="RefSeq" id="NP_006434.1">
    <molecule id="O43598-1"/>
    <property type="nucleotide sequence ID" value="NM_006443.3"/>
</dbReference>
<dbReference type="RefSeq" id="NP_954653.1">
    <molecule id="O43598-2"/>
    <property type="nucleotide sequence ID" value="NM_199184.2"/>
</dbReference>
<dbReference type="PDB" id="4P5E">
    <property type="method" value="X-ray"/>
    <property type="resolution" value="1.35 A"/>
    <property type="chains" value="A/B=20-162"/>
</dbReference>
<dbReference type="PDB" id="8OS9">
    <property type="method" value="X-ray"/>
    <property type="resolution" value="1.70 A"/>
    <property type="chains" value="A/B/C/D=20-162"/>
</dbReference>
<dbReference type="PDB" id="8OSC">
    <property type="method" value="X-ray"/>
    <property type="resolution" value="1.42 A"/>
    <property type="chains" value="A/B=20-162"/>
</dbReference>
<dbReference type="PDB" id="8QHQ">
    <property type="method" value="X-ray"/>
    <property type="resolution" value="1.78 A"/>
    <property type="chains" value="A/B/C/D/E/F=19-162"/>
</dbReference>
<dbReference type="PDB" id="8QHR">
    <property type="method" value="X-ray"/>
    <property type="resolution" value="1.65 A"/>
    <property type="chains" value="A/B=19-162"/>
</dbReference>
<dbReference type="PDB" id="8RPS">
    <property type="method" value="X-ray"/>
    <property type="resolution" value="1.75 A"/>
    <property type="chains" value="A/B/C=20-162"/>
</dbReference>
<dbReference type="PDB" id="8RPT">
    <property type="method" value="X-ray"/>
    <property type="resolution" value="1.95 A"/>
    <property type="chains" value="A/B=20-162"/>
</dbReference>
<dbReference type="PDB" id="8RQD">
    <property type="method" value="X-ray"/>
    <property type="resolution" value="2.14 A"/>
    <property type="chains" value="A/C=20-162"/>
</dbReference>
<dbReference type="PDB" id="9DA1">
    <property type="method" value="X-ray"/>
    <property type="resolution" value="1.47 A"/>
    <property type="chains" value="A/B=20-162"/>
</dbReference>
<dbReference type="PDB" id="9DA2">
    <property type="method" value="X-ray"/>
    <property type="resolution" value="1.13 A"/>
    <property type="chains" value="A/B=20-162"/>
</dbReference>
<dbReference type="PDB" id="9DA3">
    <property type="method" value="X-ray"/>
    <property type="resolution" value="1.51 A"/>
    <property type="chains" value="A/B=20-162"/>
</dbReference>
<dbReference type="PDB" id="9DA4">
    <property type="method" value="X-ray"/>
    <property type="resolution" value="1.73 A"/>
    <property type="chains" value="A=20-162"/>
</dbReference>
<dbReference type="PDB" id="9DA5">
    <property type="method" value="X-ray"/>
    <property type="resolution" value="2.82 A"/>
    <property type="chains" value="A/B=20-162"/>
</dbReference>
<dbReference type="PDB" id="9DA6">
    <property type="method" value="X-ray"/>
    <property type="resolution" value="1.35 A"/>
    <property type="chains" value="A/B=20-162"/>
</dbReference>
<dbReference type="PDBsum" id="4P5E"/>
<dbReference type="PDBsum" id="8OS9"/>
<dbReference type="PDBsum" id="8OSC"/>
<dbReference type="PDBsum" id="8QHQ"/>
<dbReference type="PDBsum" id="8QHR"/>
<dbReference type="PDBsum" id="8RPS"/>
<dbReference type="PDBsum" id="8RPT"/>
<dbReference type="PDBsum" id="8RQD"/>
<dbReference type="PDBsum" id="9DA1"/>
<dbReference type="PDBsum" id="9DA2"/>
<dbReference type="PDBsum" id="9DA3"/>
<dbReference type="PDBsum" id="9DA4"/>
<dbReference type="PDBsum" id="9DA5"/>
<dbReference type="PDBsum" id="9DA6"/>
<dbReference type="SMR" id="O43598"/>
<dbReference type="BioGRID" id="115840">
    <property type="interactions" value="22"/>
</dbReference>
<dbReference type="FunCoup" id="O43598">
    <property type="interactions" value="1001"/>
</dbReference>
<dbReference type="IntAct" id="O43598">
    <property type="interactions" value="13"/>
</dbReference>
<dbReference type="STRING" id="9606.ENSP00000230431"/>
<dbReference type="BindingDB" id="O43598"/>
<dbReference type="ChEMBL" id="CHEMBL3351218"/>
<dbReference type="DrugCentral" id="O43598"/>
<dbReference type="GlyGen" id="O43598">
    <property type="glycosylation" value="1 site, 1 O-linked glycan (1 site)"/>
</dbReference>
<dbReference type="iPTMnet" id="O43598"/>
<dbReference type="PhosphoSitePlus" id="O43598"/>
<dbReference type="SwissPalm" id="O43598"/>
<dbReference type="BioMuta" id="DNPH1"/>
<dbReference type="jPOST" id="O43598"/>
<dbReference type="MassIVE" id="O43598"/>
<dbReference type="PaxDb" id="9606-ENSP00000230431"/>
<dbReference type="PeptideAtlas" id="O43598"/>
<dbReference type="ProteomicsDB" id="49070">
    <molecule id="O43598-1"/>
</dbReference>
<dbReference type="ProteomicsDB" id="49071">
    <molecule id="O43598-2"/>
</dbReference>
<dbReference type="Pumba" id="O43598"/>
<dbReference type="TopDownProteomics" id="O43598-1">
    <molecule id="O43598-1"/>
</dbReference>
<dbReference type="Antibodypedia" id="30354">
    <property type="antibodies" value="199 antibodies from 32 providers"/>
</dbReference>
<dbReference type="DNASU" id="10591"/>
<dbReference type="Ensembl" id="ENST00000230431.11">
    <molecule id="O43598-1"/>
    <property type="protein sequence ID" value="ENSP00000230431.7"/>
    <property type="gene ID" value="ENSG00000112667.13"/>
</dbReference>
<dbReference type="Ensembl" id="ENST00000393987.2">
    <molecule id="O43598-2"/>
    <property type="protein sequence ID" value="ENSP00000377556.2"/>
    <property type="gene ID" value="ENSG00000112667.13"/>
</dbReference>
<dbReference type="GeneID" id="10591"/>
<dbReference type="KEGG" id="hsa:10591"/>
<dbReference type="MANE-Select" id="ENST00000230431.11">
    <property type="protein sequence ID" value="ENSP00000230431.7"/>
    <property type="RefSeq nucleotide sequence ID" value="NM_006443.3"/>
    <property type="RefSeq protein sequence ID" value="NP_006434.1"/>
</dbReference>
<dbReference type="UCSC" id="uc003ouo.4">
    <molecule id="O43598-1"/>
    <property type="organism name" value="human"/>
</dbReference>
<dbReference type="AGR" id="HGNC:21218"/>
<dbReference type="CTD" id="10591"/>
<dbReference type="DisGeNET" id="10591"/>
<dbReference type="GeneCards" id="DNPH1"/>
<dbReference type="HGNC" id="HGNC:21218">
    <property type="gene designation" value="DNPH1"/>
</dbReference>
<dbReference type="HPA" id="ENSG00000112667">
    <property type="expression patterns" value="Low tissue specificity"/>
</dbReference>
<dbReference type="MIM" id="618762">
    <property type="type" value="gene"/>
</dbReference>
<dbReference type="neXtProt" id="NX_O43598"/>
<dbReference type="OpenTargets" id="ENSG00000112667"/>
<dbReference type="PharmGKB" id="PA134918815"/>
<dbReference type="VEuPathDB" id="HostDB:ENSG00000112667"/>
<dbReference type="eggNOG" id="ENOG502S2J2">
    <property type="taxonomic scope" value="Eukaryota"/>
</dbReference>
<dbReference type="GeneTree" id="ENSGT00390000001216"/>
<dbReference type="InParanoid" id="O43598"/>
<dbReference type="OMA" id="GLRFQVW"/>
<dbReference type="OrthoDB" id="18087at2759"/>
<dbReference type="PAN-GO" id="O43598">
    <property type="GO annotations" value="3 GO annotations based on evolutionary models"/>
</dbReference>
<dbReference type="PhylomeDB" id="O43598"/>
<dbReference type="TreeFam" id="TF329719"/>
<dbReference type="PathwayCommons" id="O43598"/>
<dbReference type="Reactome" id="R-HSA-74259">
    <property type="pathway name" value="Purine catabolism"/>
</dbReference>
<dbReference type="SignaLink" id="O43598"/>
<dbReference type="BioGRID-ORCS" id="10591">
    <property type="hits" value="8 hits in 1150 CRISPR screens"/>
</dbReference>
<dbReference type="ChiTaRS" id="DNPH1">
    <property type="organism name" value="human"/>
</dbReference>
<dbReference type="EvolutionaryTrace" id="O43598"/>
<dbReference type="GenomeRNAi" id="10591"/>
<dbReference type="Pharos" id="O43598">
    <property type="development level" value="Tchem"/>
</dbReference>
<dbReference type="PRO" id="PR:O43598"/>
<dbReference type="Proteomes" id="UP000005640">
    <property type="component" value="Chromosome 6"/>
</dbReference>
<dbReference type="RNAct" id="O43598">
    <property type="molecule type" value="protein"/>
</dbReference>
<dbReference type="Bgee" id="ENSG00000112667">
    <property type="expression patterns" value="Expressed in right uterine tube and 159 other cell types or tissues"/>
</dbReference>
<dbReference type="ExpressionAtlas" id="O43598">
    <property type="expression patterns" value="baseline and differential"/>
</dbReference>
<dbReference type="GO" id="GO:0005737">
    <property type="term" value="C:cytoplasm"/>
    <property type="evidence" value="ECO:0000314"/>
    <property type="project" value="UniProtKB"/>
</dbReference>
<dbReference type="GO" id="GO:0005829">
    <property type="term" value="C:cytosol"/>
    <property type="evidence" value="ECO:0000304"/>
    <property type="project" value="Reactome"/>
</dbReference>
<dbReference type="GO" id="GO:0070062">
    <property type="term" value="C:extracellular exosome"/>
    <property type="evidence" value="ECO:0007005"/>
    <property type="project" value="UniProtKB"/>
</dbReference>
<dbReference type="GO" id="GO:0005634">
    <property type="term" value="C:nucleus"/>
    <property type="evidence" value="ECO:0000314"/>
    <property type="project" value="UniProtKB"/>
</dbReference>
<dbReference type="GO" id="GO:0070694">
    <property type="term" value="F:5-hydroxymethyl-dUMP N-hydrolase activity"/>
    <property type="evidence" value="ECO:0000314"/>
    <property type="project" value="UniProtKB"/>
</dbReference>
<dbReference type="GO" id="GO:0042802">
    <property type="term" value="F:identical protein binding"/>
    <property type="evidence" value="ECO:0000353"/>
    <property type="project" value="IntAct"/>
</dbReference>
<dbReference type="GO" id="GO:0042803">
    <property type="term" value="F:protein homodimerization activity"/>
    <property type="evidence" value="ECO:0007669"/>
    <property type="project" value="UniProtKB-UniRule"/>
</dbReference>
<dbReference type="GO" id="GO:0000255">
    <property type="term" value="P:allantoin metabolic process"/>
    <property type="evidence" value="ECO:0007669"/>
    <property type="project" value="Ensembl"/>
</dbReference>
<dbReference type="GO" id="GO:0009159">
    <property type="term" value="P:deoxyribonucleoside monophosphate catabolic process"/>
    <property type="evidence" value="ECO:0000314"/>
    <property type="project" value="UniProtKB"/>
</dbReference>
<dbReference type="GO" id="GO:0046055">
    <property type="term" value="P:dGMP catabolic process"/>
    <property type="evidence" value="ECO:0007669"/>
    <property type="project" value="Ensembl"/>
</dbReference>
<dbReference type="GO" id="GO:0030855">
    <property type="term" value="P:epithelial cell differentiation"/>
    <property type="evidence" value="ECO:0000270"/>
    <property type="project" value="UniProtKB"/>
</dbReference>
<dbReference type="GO" id="GO:0043174">
    <property type="term" value="P:nucleoside salvage"/>
    <property type="evidence" value="ECO:0000315"/>
    <property type="project" value="UniProtKB"/>
</dbReference>
<dbReference type="GO" id="GO:0030307">
    <property type="term" value="P:positive regulation of cell growth"/>
    <property type="evidence" value="ECO:0000250"/>
    <property type="project" value="UniProtKB"/>
</dbReference>
<dbReference type="GO" id="GO:0006195">
    <property type="term" value="P:purine nucleotide catabolic process"/>
    <property type="evidence" value="ECO:0000304"/>
    <property type="project" value="Reactome"/>
</dbReference>
<dbReference type="FunFam" id="3.40.50.450:FF:000019">
    <property type="entry name" value="2'-deoxynucleoside 5'-phosphate N-hydrolase 1"/>
    <property type="match status" value="1"/>
</dbReference>
<dbReference type="Gene3D" id="3.40.50.450">
    <property type="match status" value="1"/>
</dbReference>
<dbReference type="HAMAP" id="MF_03036">
    <property type="entry name" value="Nuc_phosphate_hydrolase"/>
    <property type="match status" value="1"/>
</dbReference>
<dbReference type="InterPro" id="IPR051239">
    <property type="entry name" value="2'-dNMP_N-hydrolase"/>
</dbReference>
<dbReference type="InterPro" id="IPR028607">
    <property type="entry name" value="DNPH1"/>
</dbReference>
<dbReference type="InterPro" id="IPR007710">
    <property type="entry name" value="Nucleoside_deoxyribTrfase"/>
</dbReference>
<dbReference type="PANTHER" id="PTHR15364">
    <property type="entry name" value="2'-DEOXYNUCLEOSIDE 5'-PHOSPHATE N-HYDROLASE 1"/>
    <property type="match status" value="1"/>
</dbReference>
<dbReference type="PANTHER" id="PTHR15364:SF0">
    <property type="entry name" value="2'-DEOXYNUCLEOSIDE 5'-PHOSPHATE N-HYDROLASE 1"/>
    <property type="match status" value="1"/>
</dbReference>
<dbReference type="Pfam" id="PF05014">
    <property type="entry name" value="Nuc_deoxyrib_tr"/>
    <property type="match status" value="1"/>
</dbReference>
<dbReference type="SUPFAM" id="SSF52309">
    <property type="entry name" value="N-(deoxy)ribosyltransferase-like"/>
    <property type="match status" value="1"/>
</dbReference>
<sequence>MAAAMVPGRSESWERGEPGRPALYFCGSIRGGREDRTLYERIVSRLRRFGTVLTEHVAAAELGARGEEAAGGDRLIHEQDLEWLQQADVVVAEVTQPSLGVGYELGRAVAFNKRILCLFRPQSGRVLSAMIRGAADGSRFQVWDYEEGEVEALLDRYFEADPPGQVAASPDPTT</sequence>
<accession>O43598</accession>
<accession>B2LUJ9</accession>
<evidence type="ECO:0000255" key="1">
    <source>
        <dbReference type="HAMAP-Rule" id="MF_03036"/>
    </source>
</evidence>
<evidence type="ECO:0000269" key="2">
    <source>
    </source>
</evidence>
<evidence type="ECO:0000269" key="3">
    <source>
    </source>
</evidence>
<evidence type="ECO:0000269" key="4">
    <source>
    </source>
</evidence>
<evidence type="ECO:0000269" key="5">
    <source>
    </source>
</evidence>
<evidence type="ECO:0000269" key="6">
    <source>
    </source>
</evidence>
<evidence type="ECO:0000269" key="7">
    <source>
    </source>
</evidence>
<evidence type="ECO:0000303" key="8">
    <source>
    </source>
</evidence>
<evidence type="ECO:0000303" key="9">
    <source>
    </source>
</evidence>
<evidence type="ECO:0000305" key="10">
    <source>
    </source>
</evidence>
<evidence type="ECO:0000312" key="11">
    <source>
        <dbReference type="HGNC" id="HGNC:21218"/>
    </source>
</evidence>
<evidence type="ECO:0007744" key="12">
    <source>
        <dbReference type="PDB" id="4P5E"/>
    </source>
</evidence>
<evidence type="ECO:0007744" key="13">
    <source>
    </source>
</evidence>
<evidence type="ECO:0007744" key="14">
    <source>
    </source>
</evidence>
<evidence type="ECO:0007744" key="15">
    <source>
    </source>
</evidence>
<evidence type="ECO:0007744" key="16">
    <source>
    </source>
</evidence>
<evidence type="ECO:0007744" key="17">
    <source>
    </source>
</evidence>
<evidence type="ECO:0007744" key="18">
    <source>
    </source>
</evidence>
<evidence type="ECO:0007744" key="19">
    <source>
    </source>
</evidence>
<evidence type="ECO:0007744" key="20">
    <source>
    </source>
</evidence>
<evidence type="ECO:0007744" key="21">
    <source>
    </source>
</evidence>
<evidence type="ECO:0007829" key="22">
    <source>
        <dbReference type="PDB" id="4P5E"/>
    </source>
</evidence>
<evidence type="ECO:0007829" key="23">
    <source>
        <dbReference type="PDB" id="8RPT"/>
    </source>
</evidence>
<comment type="function">
    <text evidence="5">Part of a nucleotide salvage pathway that eliminates epigenetically modified 5-hydroxymethyl-dCMP (hmdCMP) in a two-step process entailing deamination to cytotoxic 5-hydroxymethyl-dUMP (hmdUMP), followed by its hydrolysis into 5-hydroxymethyluracil (hmU) and 2-deoxy-D-ribose 5-phosphate (deoxyribosephosphate) (PubMed:33833118). Catalyzes the second step in that pathway, the hydrolysis of the N-glycosidic bond in hmdUMP, degrading this cytotoxic nucleotide to avoid its genomic integration (PubMed:33833118).</text>
</comment>
<comment type="catalytic activity">
    <reaction evidence="5 6">
        <text>5-hydroxymethyl-dUMP + H2O = 5-hydroxymethyluracil + 2-deoxy-D-ribose 5-phosphate</text>
        <dbReference type="Rhea" id="RHEA:77099"/>
        <dbReference type="ChEBI" id="CHEBI:15377"/>
        <dbReference type="ChEBI" id="CHEBI:16964"/>
        <dbReference type="ChEBI" id="CHEBI:62877"/>
        <dbReference type="ChEBI" id="CHEBI:90409"/>
    </reaction>
    <physiologicalReaction direction="left-to-right" evidence="5 6">
        <dbReference type="Rhea" id="RHEA:77100"/>
    </physiologicalReaction>
</comment>
<comment type="activity regulation">
    <text evidence="6">Inhibited by AMP and GMP.</text>
</comment>
<comment type="biophysicochemical properties">
    <kinetics>
        <KM evidence="6">6.3 uM for 5-hydroxymethyl-dUMP (at pH 7.0 and 37 degrees Celsius)</KM>
        <KM evidence="3">57 uM for dGMP</KM>
        <KM evidence="3">97 uM for dAMP</KM>
        <KM evidence="3">104 uM for dIMP</KM>
        <KM evidence="3">2500 uM for dCMP</KM>
        <KM evidence="3">7800 uM for dUMP</KM>
        <KM evidence="3">25000 uM for dTMP</KM>
        <text evidence="6">kcat is 0.33 sec(-1) with 5-hydroxymethyl-dUMP as substrate (PubMed:37142196). kcat is 0.014 sec(-1) with dUMP as substrate (PubMed:37142196).</text>
    </kinetics>
    <phDependence>
        <text evidence="6">Optimum pH is 6-7 at 37 degrees Celsius.</text>
    </phDependence>
</comment>
<comment type="subunit">
    <text evidence="4">Monomer and homodimer.</text>
</comment>
<comment type="interaction">
    <interactant intactId="EBI-748674">
        <id>O43598</id>
    </interactant>
    <interactant intactId="EBI-742054">
        <id>Q96D03</id>
        <label>DDIT4L</label>
    </interactant>
    <organismsDiffer>false</organismsDiffer>
    <experiments>5</experiments>
</comment>
<comment type="interaction">
    <interactant intactId="EBI-748674">
        <id>O43598</id>
    </interactant>
    <interactant intactId="EBI-748674">
        <id>O43598</id>
        <label>DNPH1</label>
    </interactant>
    <organismsDiffer>false</organismsDiffer>
    <experiments>5</experiments>
</comment>
<comment type="interaction">
    <interactant intactId="EBI-748674">
        <id>O43598</id>
    </interactant>
    <interactant intactId="EBI-399080">
        <id>Q92993</id>
        <label>KAT5</label>
    </interactant>
    <organismsDiffer>false</organismsDiffer>
    <experiments>3</experiments>
</comment>
<comment type="interaction">
    <interactant intactId="EBI-748674">
        <id>O43598</id>
    </interactant>
    <interactant intactId="EBI-11742507">
        <id>Q8TAP4-4</id>
        <label>LMO3</label>
    </interactant>
    <organismsDiffer>false</organismsDiffer>
    <experiments>3</experiments>
</comment>
<comment type="interaction">
    <interactant intactId="EBI-748674">
        <id>O43598</id>
    </interactant>
    <interactant intactId="EBI-1383528">
        <id>P17252</id>
        <label>PRKCA</label>
    </interactant>
    <organismsDiffer>false</organismsDiffer>
    <experiments>3</experiments>
</comment>
<comment type="interaction">
    <interactant intactId="EBI-748674">
        <id>O43598</id>
    </interactant>
    <interactant intactId="EBI-9090795">
        <id>Q15047-2</id>
        <label>SETDB1</label>
    </interactant>
    <organismsDiffer>false</organismsDiffer>
    <experiments>3</experiments>
</comment>
<comment type="interaction">
    <interactant intactId="EBI-748674">
        <id>O43598</id>
    </interactant>
    <interactant intactId="EBI-710997">
        <id>P54274</id>
        <label>TERF1</label>
    </interactant>
    <organismsDiffer>false</organismsDiffer>
    <experiments>2</experiments>
</comment>
<comment type="interaction">
    <interactant intactId="EBI-748674">
        <id>O43598</id>
    </interactant>
    <interactant intactId="EBI-359832">
        <id>P61981</id>
        <label>YWHAG</label>
    </interactant>
    <organismsDiffer>false</organismsDiffer>
    <experiments>3</experiments>
</comment>
<comment type="subcellular location">
    <subcellularLocation>
        <location evidence="2">Cytoplasm</location>
    </subcellularLocation>
    <subcellularLocation>
        <location evidence="7">Nucleus</location>
    </subcellularLocation>
</comment>
<comment type="alternative products">
    <event type="alternative splicing"/>
    <isoform>
        <id>O43598-1</id>
        <name>1</name>
        <sequence type="displayed"/>
    </isoform>
    <isoform>
        <id>O43598-2</id>
        <name>2</name>
        <sequence type="described" ref="VSP_040509 VSP_040510"/>
    </isoform>
</comment>
<comment type="tissue specificity">
    <text evidence="2">Expressed at low levels in brain, colon, lung, peripheral blood leukocytes, placenta, small intestine, and thymus. Expressed at high levels in heart, kidney, liver, skeletal muscle and spleen. Overexpressed in a significant proportion of breast cancers.</text>
</comment>
<comment type="induction">
    <text evidence="2">Expression is induced by ETV1.</text>
</comment>
<comment type="similarity">
    <text evidence="1">Belongs to the 2'-deoxynucleoside 5'-phosphate N-hydrolase 1 family.</text>
</comment>
<comment type="caution">
    <text evidence="3 4 5">Originally described for its in vitro hydrolytic activity towards dGMP, dAMP and dIMP (PubMed:24260472, PubMed:25108359). However, this was not confirmed in vivo (PubMed:33833118).</text>
</comment>
<name>DNPH1_HUMAN</name>
<proteinExistence type="evidence at protein level"/>
<organism>
    <name type="scientific">Homo sapiens</name>
    <name type="common">Human</name>
    <dbReference type="NCBI Taxonomy" id="9606"/>
    <lineage>
        <taxon>Eukaryota</taxon>
        <taxon>Metazoa</taxon>
        <taxon>Chordata</taxon>
        <taxon>Craniata</taxon>
        <taxon>Vertebrata</taxon>
        <taxon>Euteleostomi</taxon>
        <taxon>Mammalia</taxon>
        <taxon>Eutheria</taxon>
        <taxon>Euarchontoglires</taxon>
        <taxon>Primates</taxon>
        <taxon>Haplorrhini</taxon>
        <taxon>Catarrhini</taxon>
        <taxon>Hominidae</taxon>
        <taxon>Homo</taxon>
    </lineage>
</organism>
<keyword id="KW-0002">3D-structure</keyword>
<keyword id="KW-0007">Acetylation</keyword>
<keyword id="KW-0025">Alternative splicing</keyword>
<keyword id="KW-0963">Cytoplasm</keyword>
<keyword id="KW-0326">Glycosidase</keyword>
<keyword id="KW-0378">Hydrolase</keyword>
<keyword id="KW-0546">Nucleotide metabolism</keyword>
<keyword id="KW-0539">Nucleus</keyword>
<keyword id="KW-0597">Phosphoprotein</keyword>
<keyword id="KW-1267">Proteomics identification</keyword>
<keyword id="KW-1185">Reference proteome</keyword>
<protein>
    <recommendedName>
        <fullName evidence="10">5-hydroxymethyl-dUMP N-hydrolase</fullName>
        <ecNumber evidence="3 4 5 6">3.2.2.-</ecNumber>
    </recommendedName>
    <alternativeName>
        <fullName evidence="11">2'-deoxynucleoside 5'-phosphate N-hydrolase 1</fullName>
    </alternativeName>
    <alternativeName>
        <fullName evidence="9">c-Myc-responsive protein RCL</fullName>
    </alternativeName>
</protein>
<feature type="initiator methionine" description="Removed" evidence="18 19">
    <location>
        <position position="1"/>
    </location>
</feature>
<feature type="chain" id="PRO_0000097200" description="5-hydroxymethyl-dUMP N-hydrolase">
    <location>
        <begin position="2"/>
        <end position="174"/>
    </location>
</feature>
<feature type="binding site" evidence="4 12">
    <location>
        <position position="27"/>
    </location>
    <ligand>
        <name>5-hydroxymethyl-dUMP</name>
        <dbReference type="ChEBI" id="CHEBI:90409"/>
        <note>ligand shared between homodimeric partners</note>
    </ligand>
</feature>
<feature type="binding site" evidence="4 12">
    <location>
        <position position="29"/>
    </location>
    <ligand>
        <name>5-hydroxymethyl-dUMP</name>
        <dbReference type="ChEBI" id="CHEBI:90409"/>
        <note>ligand shared between homodimeric partners</note>
    </ligand>
</feature>
<feature type="binding site" evidence="4 12">
    <location>
        <position position="30"/>
    </location>
    <ligand>
        <name>5-hydroxymethyl-dUMP</name>
        <dbReference type="ChEBI" id="CHEBI:90409"/>
        <note>ligand shared between homodimeric partners</note>
    </ligand>
</feature>
<feature type="binding site" evidence="4 12">
    <location>
        <position position="31"/>
    </location>
    <ligand>
        <name>5-hydroxymethyl-dUMP</name>
        <dbReference type="ChEBI" id="CHEBI:90409"/>
        <note>ligand shared between homodimeric partners</note>
    </ligand>
</feature>
<feature type="binding site" evidence="4 12">
    <location>
        <position position="98"/>
    </location>
    <ligand>
        <name>5-hydroxymethyl-dUMP</name>
        <dbReference type="ChEBI" id="CHEBI:90409"/>
        <note>ligand shared between homodimeric partners</note>
    </ligand>
</feature>
<feature type="binding site" evidence="4 12">
    <location>
        <position position="100"/>
    </location>
    <ligand>
        <name>5-hydroxymethyl-dUMP</name>
        <dbReference type="ChEBI" id="CHEBI:90409"/>
        <note>ligand shared between homodimeric partners</note>
    </ligand>
</feature>
<feature type="binding site" evidence="4 12">
    <location>
        <position position="104"/>
    </location>
    <ligand>
        <name>5-hydroxymethyl-dUMP</name>
        <dbReference type="ChEBI" id="CHEBI:90409"/>
        <note>ligand shared between homodimeric partners</note>
    </ligand>
</feature>
<feature type="binding site" description="in other chain" evidence="4 12">
    <location>
        <position position="128"/>
    </location>
    <ligand>
        <name>5-hydroxymethyl-dUMP</name>
        <dbReference type="ChEBI" id="CHEBI:90409"/>
        <note>ligand shared between homodimeric partners</note>
    </ligand>
</feature>
<feature type="modified residue" description="N-acetylalanine" evidence="18 19">
    <location>
        <position position="2"/>
    </location>
</feature>
<feature type="modified residue" description="Phosphoserine" evidence="14 20">
    <location>
        <position position="28"/>
    </location>
</feature>
<feature type="modified residue" description="Phosphoserine" evidence="21">
    <location>
        <position position="98"/>
    </location>
</feature>
<feature type="modified residue" description="Phosphoserine" evidence="20">
    <location>
        <position position="123"/>
    </location>
</feature>
<feature type="modified residue" description="Phosphoserine" evidence="21">
    <location>
        <position position="128"/>
    </location>
</feature>
<feature type="modified residue" description="Phosphoserine" evidence="21">
    <location>
        <position position="138"/>
    </location>
</feature>
<feature type="modified residue" description="Phosphoserine" evidence="13 14 15 16 17 20 21">
    <location>
        <position position="169"/>
    </location>
</feature>
<feature type="splice variant" id="VSP_040509" description="In isoform 2." evidence="8">
    <original>VLSAMIRGAADGSRFQVWDYEEG</original>
    <variation>GEHPKPPSWLSMDPALSSFPGGL</variation>
    <location>
        <begin position="126"/>
        <end position="148"/>
    </location>
</feature>
<feature type="splice variant" id="VSP_040510" description="In isoform 2." evidence="8">
    <location>
        <begin position="149"/>
        <end position="174"/>
    </location>
</feature>
<feature type="mutagenesis site" description="Loss of deoxyribonucleoside 5'-monophosphate N-glycosidase activity." evidence="5">
    <original>E</original>
    <variation>Q</variation>
    <location>
        <position position="104"/>
    </location>
</feature>
<feature type="strand" evidence="22">
    <location>
        <begin position="22"/>
        <end position="26"/>
    </location>
</feature>
<feature type="helix" evidence="22">
    <location>
        <begin position="36"/>
        <end position="46"/>
    </location>
</feature>
<feature type="turn" evidence="22">
    <location>
        <begin position="47"/>
        <end position="49"/>
    </location>
</feature>
<feature type="strand" evidence="22">
    <location>
        <begin position="50"/>
        <end position="53"/>
    </location>
</feature>
<feature type="helix" evidence="22">
    <location>
        <begin position="55"/>
        <end position="58"/>
    </location>
</feature>
<feature type="helix" evidence="23">
    <location>
        <begin position="63"/>
        <end position="65"/>
    </location>
</feature>
<feature type="turn" evidence="22">
    <location>
        <begin position="68"/>
        <end position="71"/>
    </location>
</feature>
<feature type="helix" evidence="22">
    <location>
        <begin position="73"/>
        <end position="86"/>
    </location>
</feature>
<feature type="strand" evidence="22">
    <location>
        <begin position="88"/>
        <end position="93"/>
    </location>
</feature>
<feature type="helix" evidence="22">
    <location>
        <begin position="99"/>
        <end position="110"/>
    </location>
</feature>
<feature type="strand" evidence="22">
    <location>
        <begin position="115"/>
        <end position="119"/>
    </location>
</feature>
<feature type="helix" evidence="22">
    <location>
        <begin position="121"/>
        <end position="123"/>
    </location>
</feature>
<feature type="helix" evidence="22">
    <location>
        <begin position="129"/>
        <end position="134"/>
    </location>
</feature>
<feature type="strand" evidence="22">
    <location>
        <begin position="137"/>
        <end position="144"/>
    </location>
</feature>
<feature type="helix" evidence="22">
    <location>
        <begin position="147"/>
        <end position="149"/>
    </location>
</feature>
<feature type="helix" evidence="22">
    <location>
        <begin position="150"/>
        <end position="160"/>
    </location>
</feature>
<reference key="1">
    <citation type="journal article" date="1997" name="Mol. Cell. Biol.">
        <title>Identification of putative c-Myc-responsive genes: characterization of rcl, a novel growth-related gene.</title>
        <authorList>
            <person name="Lewis B.C."/>
            <person name="Shim H."/>
            <person name="Li Q."/>
            <person name="Wu C.S."/>
            <person name="Lee L.A."/>
            <person name="Maity A."/>
            <person name="Dang C.V."/>
        </authorList>
    </citation>
    <scope>NUCLEOTIDE SEQUENCE [MRNA] (ISOFORM 1)</scope>
    <scope>SUBCELLULAR LOCATION</scope>
    <source>
        <tissue>Liver</tissue>
    </source>
</reference>
<reference key="2">
    <citation type="journal article" date="2008" name="J. Cell. Biochem.">
        <title>Rcl is a novel ETV1/ER81 target gene upregulated in breast tumors.</title>
        <authorList>
            <person name="Shin S."/>
            <person name="Bosc D.G."/>
            <person name="Ingle J.N."/>
            <person name="Spelsberg T.C."/>
            <person name="Janknecht R."/>
        </authorList>
    </citation>
    <scope>NUCLEOTIDE SEQUENCE [MRNA] (ISOFORM 1)</scope>
    <scope>SUBCELLULAR LOCATION</scope>
    <scope>TISSUE SPECIFICITY</scope>
    <scope>INDUCTION</scope>
    <source>
        <tissue>Kidney</tissue>
    </source>
</reference>
<reference key="3">
    <citation type="journal article" date="2003" name="Nature">
        <title>The DNA sequence and analysis of human chromosome 6.</title>
        <authorList>
            <person name="Mungall A.J."/>
            <person name="Palmer S.A."/>
            <person name="Sims S.K."/>
            <person name="Edwards C.A."/>
            <person name="Ashurst J.L."/>
            <person name="Wilming L."/>
            <person name="Jones M.C."/>
            <person name="Horton R."/>
            <person name="Hunt S.E."/>
            <person name="Scott C.E."/>
            <person name="Gilbert J.G.R."/>
            <person name="Clamp M.E."/>
            <person name="Bethel G."/>
            <person name="Milne S."/>
            <person name="Ainscough R."/>
            <person name="Almeida J.P."/>
            <person name="Ambrose K.D."/>
            <person name="Andrews T.D."/>
            <person name="Ashwell R.I.S."/>
            <person name="Babbage A.K."/>
            <person name="Bagguley C.L."/>
            <person name="Bailey J."/>
            <person name="Banerjee R."/>
            <person name="Barker D.J."/>
            <person name="Barlow K.F."/>
            <person name="Bates K."/>
            <person name="Beare D.M."/>
            <person name="Beasley H."/>
            <person name="Beasley O."/>
            <person name="Bird C.P."/>
            <person name="Blakey S.E."/>
            <person name="Bray-Allen S."/>
            <person name="Brook J."/>
            <person name="Brown A.J."/>
            <person name="Brown J.Y."/>
            <person name="Burford D.C."/>
            <person name="Burrill W."/>
            <person name="Burton J."/>
            <person name="Carder C."/>
            <person name="Carter N.P."/>
            <person name="Chapman J.C."/>
            <person name="Clark S.Y."/>
            <person name="Clark G."/>
            <person name="Clee C.M."/>
            <person name="Clegg S."/>
            <person name="Cobley V."/>
            <person name="Collier R.E."/>
            <person name="Collins J.E."/>
            <person name="Colman L.K."/>
            <person name="Corby N.R."/>
            <person name="Coville G.J."/>
            <person name="Culley K.M."/>
            <person name="Dhami P."/>
            <person name="Davies J."/>
            <person name="Dunn M."/>
            <person name="Earthrowl M.E."/>
            <person name="Ellington A.E."/>
            <person name="Evans K.A."/>
            <person name="Faulkner L."/>
            <person name="Francis M.D."/>
            <person name="Frankish A."/>
            <person name="Frankland J."/>
            <person name="French L."/>
            <person name="Garner P."/>
            <person name="Garnett J."/>
            <person name="Ghori M.J."/>
            <person name="Gilby L.M."/>
            <person name="Gillson C.J."/>
            <person name="Glithero R.J."/>
            <person name="Grafham D.V."/>
            <person name="Grant M."/>
            <person name="Gribble S."/>
            <person name="Griffiths C."/>
            <person name="Griffiths M.N.D."/>
            <person name="Hall R."/>
            <person name="Halls K.S."/>
            <person name="Hammond S."/>
            <person name="Harley J.L."/>
            <person name="Hart E.A."/>
            <person name="Heath P.D."/>
            <person name="Heathcott R."/>
            <person name="Holmes S.J."/>
            <person name="Howden P.J."/>
            <person name="Howe K.L."/>
            <person name="Howell G.R."/>
            <person name="Huckle E."/>
            <person name="Humphray S.J."/>
            <person name="Humphries M.D."/>
            <person name="Hunt A.R."/>
            <person name="Johnson C.M."/>
            <person name="Joy A.A."/>
            <person name="Kay M."/>
            <person name="Keenan S.J."/>
            <person name="Kimberley A.M."/>
            <person name="King A."/>
            <person name="Laird G.K."/>
            <person name="Langford C."/>
            <person name="Lawlor S."/>
            <person name="Leongamornlert D.A."/>
            <person name="Leversha M."/>
            <person name="Lloyd C.R."/>
            <person name="Lloyd D.M."/>
            <person name="Loveland J.E."/>
            <person name="Lovell J."/>
            <person name="Martin S."/>
            <person name="Mashreghi-Mohammadi M."/>
            <person name="Maslen G.L."/>
            <person name="Matthews L."/>
            <person name="McCann O.T."/>
            <person name="McLaren S.J."/>
            <person name="McLay K."/>
            <person name="McMurray A."/>
            <person name="Moore M.J.F."/>
            <person name="Mullikin J.C."/>
            <person name="Niblett D."/>
            <person name="Nickerson T."/>
            <person name="Novik K.L."/>
            <person name="Oliver K."/>
            <person name="Overton-Larty E.K."/>
            <person name="Parker A."/>
            <person name="Patel R."/>
            <person name="Pearce A.V."/>
            <person name="Peck A.I."/>
            <person name="Phillimore B.J.C.T."/>
            <person name="Phillips S."/>
            <person name="Plumb R.W."/>
            <person name="Porter K.M."/>
            <person name="Ramsey Y."/>
            <person name="Ranby S.A."/>
            <person name="Rice C.M."/>
            <person name="Ross M.T."/>
            <person name="Searle S.M."/>
            <person name="Sehra H.K."/>
            <person name="Sheridan E."/>
            <person name="Skuce C.D."/>
            <person name="Smith S."/>
            <person name="Smith M."/>
            <person name="Spraggon L."/>
            <person name="Squares S.L."/>
            <person name="Steward C.A."/>
            <person name="Sycamore N."/>
            <person name="Tamlyn-Hall G."/>
            <person name="Tester J."/>
            <person name="Theaker A.J."/>
            <person name="Thomas D.W."/>
            <person name="Thorpe A."/>
            <person name="Tracey A."/>
            <person name="Tromans A."/>
            <person name="Tubby B."/>
            <person name="Wall M."/>
            <person name="Wallis J.M."/>
            <person name="West A.P."/>
            <person name="White S.S."/>
            <person name="Whitehead S.L."/>
            <person name="Whittaker H."/>
            <person name="Wild A."/>
            <person name="Willey D.J."/>
            <person name="Wilmer T.E."/>
            <person name="Wood J.M."/>
            <person name="Wray P.W."/>
            <person name="Wyatt J.C."/>
            <person name="Young L."/>
            <person name="Younger R.M."/>
            <person name="Bentley D.R."/>
            <person name="Coulson A."/>
            <person name="Durbin R.M."/>
            <person name="Hubbard T."/>
            <person name="Sulston J.E."/>
            <person name="Dunham I."/>
            <person name="Rogers J."/>
            <person name="Beck S."/>
        </authorList>
    </citation>
    <scope>NUCLEOTIDE SEQUENCE [LARGE SCALE GENOMIC DNA]</scope>
    <source>
        <tissue>Liver</tissue>
    </source>
</reference>
<reference key="4">
    <citation type="submission" date="2005-07" db="EMBL/GenBank/DDBJ databases">
        <authorList>
            <person name="Mural R.J."/>
            <person name="Istrail S."/>
            <person name="Sutton G.G."/>
            <person name="Florea L."/>
            <person name="Halpern A.L."/>
            <person name="Mobarry C.M."/>
            <person name="Lippert R."/>
            <person name="Walenz B."/>
            <person name="Shatkay H."/>
            <person name="Dew I."/>
            <person name="Miller J.R."/>
            <person name="Flanigan M.J."/>
            <person name="Edwards N.J."/>
            <person name="Bolanos R."/>
            <person name="Fasulo D."/>
            <person name="Halldorsson B.V."/>
            <person name="Hannenhalli S."/>
            <person name="Turner R."/>
            <person name="Yooseph S."/>
            <person name="Lu F."/>
            <person name="Nusskern D.R."/>
            <person name="Shue B.C."/>
            <person name="Zheng X.H."/>
            <person name="Zhong F."/>
            <person name="Delcher A.L."/>
            <person name="Huson D.H."/>
            <person name="Kravitz S.A."/>
            <person name="Mouchard L."/>
            <person name="Reinert K."/>
            <person name="Remington K.A."/>
            <person name="Clark A.G."/>
            <person name="Waterman M.S."/>
            <person name="Eichler E.E."/>
            <person name="Adams M.D."/>
            <person name="Hunkapiller M.W."/>
            <person name="Myers E.W."/>
            <person name="Venter J.C."/>
        </authorList>
    </citation>
    <scope>NUCLEOTIDE SEQUENCE [LARGE SCALE GENOMIC DNA]</scope>
</reference>
<reference key="5">
    <citation type="journal article" date="2004" name="Genome Res.">
        <title>The status, quality, and expansion of the NIH full-length cDNA project: the Mammalian Gene Collection (MGC).</title>
        <authorList>
            <consortium name="The MGC Project Team"/>
        </authorList>
    </citation>
    <scope>NUCLEOTIDE SEQUENCE [LARGE SCALE MRNA] (ISOFORMS 1 AND 2)</scope>
    <source>
        <tissue>Uterus</tissue>
    </source>
</reference>
<reference key="6">
    <citation type="journal article" date="2006" name="Cell">
        <title>Global, in vivo, and site-specific phosphorylation dynamics in signaling networks.</title>
        <authorList>
            <person name="Olsen J.V."/>
            <person name="Blagoev B."/>
            <person name="Gnad F."/>
            <person name="Macek B."/>
            <person name="Kumar C."/>
            <person name="Mortensen P."/>
            <person name="Mann M."/>
        </authorList>
    </citation>
    <scope>PHOSPHORYLATION [LARGE SCALE ANALYSIS] AT SER-169</scope>
    <scope>IDENTIFICATION BY MASS SPECTROMETRY [LARGE SCALE ANALYSIS]</scope>
    <source>
        <tissue>Cervix carcinoma</tissue>
    </source>
</reference>
<reference key="7">
    <citation type="journal article" date="2008" name="Proc. Natl. Acad. Sci. U.S.A.">
        <title>A quantitative atlas of mitotic phosphorylation.</title>
        <authorList>
            <person name="Dephoure N."/>
            <person name="Zhou C."/>
            <person name="Villen J."/>
            <person name="Beausoleil S.A."/>
            <person name="Bakalarski C.E."/>
            <person name="Elledge S.J."/>
            <person name="Gygi S.P."/>
        </authorList>
    </citation>
    <scope>PHOSPHORYLATION [LARGE SCALE ANALYSIS] AT SER-28 AND SER-169</scope>
    <scope>IDENTIFICATION BY MASS SPECTROMETRY [LARGE SCALE ANALYSIS]</scope>
    <source>
        <tissue>Cervix carcinoma</tissue>
    </source>
</reference>
<reference key="8">
    <citation type="journal article" date="2009" name="Anal. Chem.">
        <title>Lys-N and trypsin cover complementary parts of the phosphoproteome in a refined SCX-based approach.</title>
        <authorList>
            <person name="Gauci S."/>
            <person name="Helbig A.O."/>
            <person name="Slijper M."/>
            <person name="Krijgsveld J."/>
            <person name="Heck A.J."/>
            <person name="Mohammed S."/>
        </authorList>
    </citation>
    <scope>IDENTIFICATION BY MASS SPECTROMETRY [LARGE SCALE ANALYSIS]</scope>
</reference>
<reference key="9">
    <citation type="journal article" date="2009" name="Sci. Signal.">
        <title>Quantitative phosphoproteomic analysis of T cell receptor signaling reveals system-wide modulation of protein-protein interactions.</title>
        <authorList>
            <person name="Mayya V."/>
            <person name="Lundgren D.H."/>
            <person name="Hwang S.-I."/>
            <person name="Rezaul K."/>
            <person name="Wu L."/>
            <person name="Eng J.K."/>
            <person name="Rodionov V."/>
            <person name="Han D.K."/>
        </authorList>
    </citation>
    <scope>PHOSPHORYLATION [LARGE SCALE ANALYSIS] AT SER-169</scope>
    <scope>IDENTIFICATION BY MASS SPECTROMETRY [LARGE SCALE ANALYSIS]</scope>
    <source>
        <tissue>Leukemic T-cell</tissue>
    </source>
</reference>
<reference key="10">
    <citation type="journal article" date="2010" name="Sci. Signal.">
        <title>Quantitative phosphoproteomics reveals widespread full phosphorylation site occupancy during mitosis.</title>
        <authorList>
            <person name="Olsen J.V."/>
            <person name="Vermeulen M."/>
            <person name="Santamaria A."/>
            <person name="Kumar C."/>
            <person name="Miller M.L."/>
            <person name="Jensen L.J."/>
            <person name="Gnad F."/>
            <person name="Cox J."/>
            <person name="Jensen T.S."/>
            <person name="Nigg E.A."/>
            <person name="Brunak S."/>
            <person name="Mann M."/>
        </authorList>
    </citation>
    <scope>PHOSPHORYLATION [LARGE SCALE ANALYSIS] AT SER-169</scope>
    <scope>IDENTIFICATION BY MASS SPECTROMETRY [LARGE SCALE ANALYSIS]</scope>
    <source>
        <tissue>Cervix carcinoma</tissue>
    </source>
</reference>
<reference key="11">
    <citation type="journal article" date="2011" name="BMC Syst. Biol.">
        <title>Initial characterization of the human central proteome.</title>
        <authorList>
            <person name="Burkard T.R."/>
            <person name="Planyavsky M."/>
            <person name="Kaupe I."/>
            <person name="Breitwieser F.P."/>
            <person name="Buerckstuemmer T."/>
            <person name="Bennett K.L."/>
            <person name="Superti-Furga G."/>
            <person name="Colinge J."/>
        </authorList>
    </citation>
    <scope>IDENTIFICATION BY MASS SPECTROMETRY [LARGE SCALE ANALYSIS]</scope>
</reference>
<reference key="12">
    <citation type="journal article" date="2011" name="Sci. Signal.">
        <title>System-wide temporal characterization of the proteome and phosphoproteome of human embryonic stem cell differentiation.</title>
        <authorList>
            <person name="Rigbolt K.T."/>
            <person name="Prokhorova T.A."/>
            <person name="Akimov V."/>
            <person name="Henningsen J."/>
            <person name="Johansen P.T."/>
            <person name="Kratchmarova I."/>
            <person name="Kassem M."/>
            <person name="Mann M."/>
            <person name="Olsen J.V."/>
            <person name="Blagoev B."/>
        </authorList>
    </citation>
    <scope>PHOSPHORYLATION [LARGE SCALE ANALYSIS] AT SER-169</scope>
    <scope>IDENTIFICATION BY MASS SPECTROMETRY [LARGE SCALE ANALYSIS]</scope>
</reference>
<reference key="13">
    <citation type="journal article" date="2012" name="Mol. Cell. Proteomics">
        <title>Comparative large-scale characterisation of plant vs. mammal proteins reveals similar and idiosyncratic N-alpha acetylation features.</title>
        <authorList>
            <person name="Bienvenut W.V."/>
            <person name="Sumpton D."/>
            <person name="Martinez A."/>
            <person name="Lilla S."/>
            <person name="Espagne C."/>
            <person name="Meinnel T."/>
            <person name="Giglione C."/>
        </authorList>
    </citation>
    <scope>ACETYLATION [LARGE SCALE ANALYSIS] AT ALA-2</scope>
    <scope>CLEAVAGE OF INITIATOR METHIONINE [LARGE SCALE ANALYSIS]</scope>
    <scope>IDENTIFICATION BY MASS SPECTROMETRY [LARGE SCALE ANALYSIS]</scope>
</reference>
<reference key="14">
    <citation type="journal article" date="2012" name="Proc. Natl. Acad. Sci. U.S.A.">
        <title>N-terminal acetylome analyses and functional insights of the N-terminal acetyltransferase NatB.</title>
        <authorList>
            <person name="Van Damme P."/>
            <person name="Lasa M."/>
            <person name="Polevoda B."/>
            <person name="Gazquez C."/>
            <person name="Elosegui-Artola A."/>
            <person name="Kim D.S."/>
            <person name="De Juan-Pardo E."/>
            <person name="Demeyer K."/>
            <person name="Hole K."/>
            <person name="Larrea E."/>
            <person name="Timmerman E."/>
            <person name="Prieto J."/>
            <person name="Arnesen T."/>
            <person name="Sherman F."/>
            <person name="Gevaert K."/>
            <person name="Aldabe R."/>
        </authorList>
    </citation>
    <scope>ACETYLATION [LARGE SCALE ANALYSIS] AT ALA-2</scope>
    <scope>CLEAVAGE OF INITIATOR METHIONINE [LARGE SCALE ANALYSIS]</scope>
    <scope>IDENTIFICATION BY MASS SPECTROMETRY [LARGE SCALE ANALYSIS]</scope>
</reference>
<reference key="15">
    <citation type="journal article" date="2013" name="J. Proteome Res.">
        <title>Toward a comprehensive characterization of a human cancer cell phosphoproteome.</title>
        <authorList>
            <person name="Zhou H."/>
            <person name="Di Palma S."/>
            <person name="Preisinger C."/>
            <person name="Peng M."/>
            <person name="Polat A.N."/>
            <person name="Heck A.J."/>
            <person name="Mohammed S."/>
        </authorList>
    </citation>
    <scope>PHOSPHORYLATION [LARGE SCALE ANALYSIS] AT SER-28; SER-123 AND SER-169</scope>
    <scope>IDENTIFICATION BY MASS SPECTROMETRY [LARGE SCALE ANALYSIS]</scope>
    <source>
        <tissue>Cervix carcinoma</tissue>
        <tissue>Erythroleukemia</tissue>
    </source>
</reference>
<reference key="16">
    <citation type="journal article" date="2013" name="PLoS ONE">
        <title>N (6)-substituted AMPs inhibit mammalian deoxynucleotide N-hydrolase DNPH1.</title>
        <authorList>
            <person name="Amiable C."/>
            <person name="Pochet S."/>
            <person name="Padilla A."/>
            <person name="Labesse G."/>
            <person name="Kaminski P.A."/>
        </authorList>
    </citation>
    <scope>BIOPHYSICOCHEMICAL PROPERTIES</scope>
    <scope>CAUTION</scope>
</reference>
<reference key="17">
    <citation type="journal article" date="2014" name="J. Proteomics">
        <title>An enzyme assisted RP-RPLC approach for in-depth analysis of human liver phosphoproteome.</title>
        <authorList>
            <person name="Bian Y."/>
            <person name="Song C."/>
            <person name="Cheng K."/>
            <person name="Dong M."/>
            <person name="Wang F."/>
            <person name="Huang J."/>
            <person name="Sun D."/>
            <person name="Wang L."/>
            <person name="Ye M."/>
            <person name="Zou H."/>
        </authorList>
    </citation>
    <scope>PHOSPHORYLATION [LARGE SCALE ANALYSIS] AT SER-98; SER-128; SER-138 AND SER-169</scope>
    <scope>IDENTIFICATION BY MASS SPECTROMETRY [LARGE SCALE ANALYSIS]</scope>
    <source>
        <tissue>Liver</tissue>
    </source>
</reference>
<reference key="18">
    <citation type="journal article" date="2015" name="Proteomics">
        <title>N-terminome analysis of the human mitochondrial proteome.</title>
        <authorList>
            <person name="Vaca Jacome A.S."/>
            <person name="Rabilloud T."/>
            <person name="Schaeffer-Reiss C."/>
            <person name="Rompais M."/>
            <person name="Ayoub D."/>
            <person name="Lane L."/>
            <person name="Bairoch A."/>
            <person name="Van Dorsselaer A."/>
            <person name="Carapito C."/>
        </authorList>
    </citation>
    <scope>IDENTIFICATION BY MASS SPECTROMETRY [LARGE SCALE ANALYSIS]</scope>
</reference>
<reference key="19">
    <citation type="journal article" date="2021" name="Science">
        <title>Targeting the nucleotide salvage factor DNPH1 sensitizes BRCA-deficient cells to PARP inhibitors.</title>
        <authorList>
            <person name="Fugger K."/>
            <person name="Bajrami I."/>
            <person name="Silva Dos Santos M."/>
            <person name="Young S.J."/>
            <person name="Kunzelmann S."/>
            <person name="Kelly G."/>
            <person name="Hewitt G."/>
            <person name="Patel H."/>
            <person name="Goldstone R."/>
            <person name="Carell T."/>
            <person name="Boulton S.J."/>
            <person name="MacRae J."/>
            <person name="Taylor I.A."/>
            <person name="West S.C."/>
        </authorList>
    </citation>
    <scope>FUNCTION</scope>
    <scope>CATALYTIC ACTIVITY</scope>
    <scope>MUTAGENESIS OF GLU-104</scope>
    <scope>CAUTION</scope>
</reference>
<reference key="20">
    <citation type="journal article" date="2023" name="Anal. Biochem.">
        <title>An enzyme-coupled microplate assay for activity and inhibition of hmdUMP hydrolysis by DNPH1.</title>
        <authorList>
            <person name="Wagner A.G."/>
            <person name="Eskandari R."/>
            <person name="Schramm V.L."/>
        </authorList>
    </citation>
    <scope>CATALYTIC ACTIVITY</scope>
    <scope>BIOPHYSICOCHEMICAL PROPERTIES</scope>
    <scope>ACTIVITY REGULATION</scope>
</reference>
<reference evidence="12" key="21">
    <citation type="journal article" date="2014" name="Eur. J. Med. Chem.">
        <title>6-(Hetero)Arylpurine nucleotides as inhibitors of the oncogenic target DNPH1: Synthesis, structural studies and cytotoxic activities.</title>
        <authorList>
            <person name="Amiable C."/>
            <person name="Paoletti J."/>
            <person name="Haouz A."/>
            <person name="Padilla A."/>
            <person name="Labesse G."/>
            <person name="Kaminski P.A."/>
            <person name="Pochet S."/>
        </authorList>
    </citation>
    <scope>X-RAY CRYSTALLOGRAPHY (1.35 ANGSTROMS) OF 20-162 IN COMPLEX WITH THE SUBSTRATE ANALOG 6-(NAPHTHALEN-2-YL)-9-(5-O-PHOSPHONO-BETA-D-RIBOFURANOSYL)-9H-PURINE</scope>
    <scope>SUBUNIT</scope>
    <scope>CAUTION</scope>
</reference>